<gene>
    <name evidence="1" type="primary">rplQ</name>
    <name type="ordered locus">BCG_3521c</name>
</gene>
<feature type="chain" id="PRO_1000055873" description="Large ribosomal subunit protein bL17">
    <location>
        <begin position="1"/>
        <end position="180"/>
    </location>
</feature>
<feature type="region of interest" description="Disordered" evidence="2">
    <location>
        <begin position="134"/>
        <end position="180"/>
    </location>
</feature>
<protein>
    <recommendedName>
        <fullName evidence="1">Large ribosomal subunit protein bL17</fullName>
    </recommendedName>
    <alternativeName>
        <fullName evidence="3">50S ribosomal protein L17</fullName>
    </alternativeName>
</protein>
<reference key="1">
    <citation type="journal article" date="2007" name="Proc. Natl. Acad. Sci. U.S.A.">
        <title>Genome plasticity of BCG and impact on vaccine efficacy.</title>
        <authorList>
            <person name="Brosch R."/>
            <person name="Gordon S.V."/>
            <person name="Garnier T."/>
            <person name="Eiglmeier K."/>
            <person name="Frigui W."/>
            <person name="Valenti P."/>
            <person name="Dos Santos S."/>
            <person name="Duthoy S."/>
            <person name="Lacroix C."/>
            <person name="Garcia-Pelayo C."/>
            <person name="Inwald J.K."/>
            <person name="Golby P."/>
            <person name="Garcia J.N."/>
            <person name="Hewinson R.G."/>
            <person name="Behr M.A."/>
            <person name="Quail M.A."/>
            <person name="Churcher C."/>
            <person name="Barrell B.G."/>
            <person name="Parkhill J."/>
            <person name="Cole S.T."/>
        </authorList>
    </citation>
    <scope>NUCLEOTIDE SEQUENCE [LARGE SCALE GENOMIC DNA]</scope>
    <source>
        <strain>BCG / Pasteur 1173P2</strain>
    </source>
</reference>
<evidence type="ECO:0000255" key="1">
    <source>
        <dbReference type="HAMAP-Rule" id="MF_01368"/>
    </source>
</evidence>
<evidence type="ECO:0000256" key="2">
    <source>
        <dbReference type="SAM" id="MobiDB-lite"/>
    </source>
</evidence>
<evidence type="ECO:0000305" key="3"/>
<accession>A1KPE2</accession>
<sequence length="180" mass="19475">MPKPTKGPRLGGSSSHQKAILANLATSLFEHGRITTTEPKARALRPYAEKLITHAKKGALHNRREVLKKLRDKDVVHTLFAEIGPFFADRDGGYTRIIKIEARKGDNAPMAVIELVREKTVTSEANRARRVAAAQAKAKKAAAMPTEESEAKPAEEGDVVGASEPDAKAPEEPPAEAPEN</sequence>
<dbReference type="EMBL" id="AM408590">
    <property type="protein sequence ID" value="CAL73510.1"/>
    <property type="molecule type" value="Genomic_DNA"/>
</dbReference>
<dbReference type="RefSeq" id="WP_003418346.1">
    <property type="nucleotide sequence ID" value="NC_008769.1"/>
</dbReference>
<dbReference type="SMR" id="A1KPE2"/>
<dbReference type="GeneID" id="45427445"/>
<dbReference type="KEGG" id="mbb:BCG_3521c"/>
<dbReference type="HOGENOM" id="CLU_074407_0_0_11"/>
<dbReference type="Proteomes" id="UP000001472">
    <property type="component" value="Chromosome"/>
</dbReference>
<dbReference type="GO" id="GO:0022625">
    <property type="term" value="C:cytosolic large ribosomal subunit"/>
    <property type="evidence" value="ECO:0007669"/>
    <property type="project" value="TreeGrafter"/>
</dbReference>
<dbReference type="GO" id="GO:0003735">
    <property type="term" value="F:structural constituent of ribosome"/>
    <property type="evidence" value="ECO:0007669"/>
    <property type="project" value="InterPro"/>
</dbReference>
<dbReference type="GO" id="GO:0006412">
    <property type="term" value="P:translation"/>
    <property type="evidence" value="ECO:0007669"/>
    <property type="project" value="UniProtKB-UniRule"/>
</dbReference>
<dbReference type="FunFam" id="3.90.1030.10:FF:000001">
    <property type="entry name" value="50S ribosomal protein L17"/>
    <property type="match status" value="1"/>
</dbReference>
<dbReference type="Gene3D" id="3.90.1030.10">
    <property type="entry name" value="Ribosomal protein L17"/>
    <property type="match status" value="1"/>
</dbReference>
<dbReference type="HAMAP" id="MF_01368">
    <property type="entry name" value="Ribosomal_bL17"/>
    <property type="match status" value="1"/>
</dbReference>
<dbReference type="InterPro" id="IPR000456">
    <property type="entry name" value="Ribosomal_bL17"/>
</dbReference>
<dbReference type="InterPro" id="IPR047859">
    <property type="entry name" value="Ribosomal_bL17_CS"/>
</dbReference>
<dbReference type="InterPro" id="IPR036373">
    <property type="entry name" value="Ribosomal_bL17_sf"/>
</dbReference>
<dbReference type="NCBIfam" id="TIGR00059">
    <property type="entry name" value="L17"/>
    <property type="match status" value="1"/>
</dbReference>
<dbReference type="PANTHER" id="PTHR14413:SF16">
    <property type="entry name" value="LARGE RIBOSOMAL SUBUNIT PROTEIN BL17M"/>
    <property type="match status" value="1"/>
</dbReference>
<dbReference type="PANTHER" id="PTHR14413">
    <property type="entry name" value="RIBOSOMAL PROTEIN L17"/>
    <property type="match status" value="1"/>
</dbReference>
<dbReference type="Pfam" id="PF01196">
    <property type="entry name" value="Ribosomal_L17"/>
    <property type="match status" value="1"/>
</dbReference>
<dbReference type="SUPFAM" id="SSF64263">
    <property type="entry name" value="Prokaryotic ribosomal protein L17"/>
    <property type="match status" value="1"/>
</dbReference>
<dbReference type="PROSITE" id="PS01167">
    <property type="entry name" value="RIBOSOMAL_L17"/>
    <property type="match status" value="1"/>
</dbReference>
<proteinExistence type="inferred from homology"/>
<keyword id="KW-0687">Ribonucleoprotein</keyword>
<keyword id="KW-0689">Ribosomal protein</keyword>
<name>RL17_MYCBP</name>
<comment type="subunit">
    <text evidence="1">Part of the 50S ribosomal subunit. Contacts protein L32.</text>
</comment>
<comment type="similarity">
    <text evidence="1">Belongs to the bacterial ribosomal protein bL17 family.</text>
</comment>
<organism>
    <name type="scientific">Mycobacterium bovis (strain BCG / Pasteur 1173P2)</name>
    <dbReference type="NCBI Taxonomy" id="410289"/>
    <lineage>
        <taxon>Bacteria</taxon>
        <taxon>Bacillati</taxon>
        <taxon>Actinomycetota</taxon>
        <taxon>Actinomycetes</taxon>
        <taxon>Mycobacteriales</taxon>
        <taxon>Mycobacteriaceae</taxon>
        <taxon>Mycobacterium</taxon>
        <taxon>Mycobacterium tuberculosis complex</taxon>
    </lineage>
</organism>